<comment type="function">
    <text evidence="1">Cleaves peptides in various proteins in a process that requires ATP hydrolysis. Has a chymotrypsin-like activity. Plays a major role in the degradation of misfolded proteins.</text>
</comment>
<comment type="catalytic activity">
    <reaction evidence="1">
        <text>Hydrolysis of proteins to small peptides in the presence of ATP and magnesium. alpha-casein is the usual test substrate. In the absence of ATP, only oligopeptides shorter than five residues are hydrolyzed (such as succinyl-Leu-Tyr-|-NHMec, and Leu-Tyr-Leu-|-Tyr-Trp, in which cleavage of the -Tyr-|-Leu- and -Tyr-|-Trp bonds also occurs).</text>
        <dbReference type="EC" id="3.4.21.92"/>
    </reaction>
</comment>
<comment type="subunit">
    <text>Component of the chloroplastic Clp protease core complex.</text>
</comment>
<comment type="subcellular location">
    <subcellularLocation>
        <location evidence="1">Plastid</location>
        <location evidence="1">Chloroplast stroma</location>
    </subcellularLocation>
</comment>
<comment type="similarity">
    <text evidence="1">Belongs to the peptidase S14 family.</text>
</comment>
<accession>Q0G9T7</accession>
<sequence>MPIGVPKVPFRSPGEEDASWVDVYNRLYRERLLFLGQEVDSEISNQLIGLMVYLSIENDTKDLYLFINSPGGWVIPGVAIYDTMQFVRPDVQTICMGLAASMGSFILAGGEITKRLAFPHARVMIHQPASSFYEAQTGEFILEAEELLKLRETLTRVYVQRTDKPLWVVSEDMERDVFMSATEAQAYGIVDLVAVVE</sequence>
<feature type="chain" id="PRO_0000275282" description="ATP-dependent Clp protease proteolytic subunit">
    <location>
        <begin position="1"/>
        <end position="197"/>
    </location>
</feature>
<feature type="active site" description="Nucleophile" evidence="1">
    <location>
        <position position="101"/>
    </location>
</feature>
<feature type="active site" evidence="1">
    <location>
        <position position="126"/>
    </location>
</feature>
<protein>
    <recommendedName>
        <fullName evidence="1">ATP-dependent Clp protease proteolytic subunit</fullName>
        <ecNumber evidence="1">3.4.21.92</ecNumber>
    </recommendedName>
    <alternativeName>
        <fullName evidence="1">Endopeptidase Clp</fullName>
    </alternativeName>
</protein>
<evidence type="ECO:0000255" key="1">
    <source>
        <dbReference type="HAMAP-Rule" id="MF_00444"/>
    </source>
</evidence>
<geneLocation type="chloroplast"/>
<gene>
    <name evidence="1" type="primary">clpP</name>
</gene>
<proteinExistence type="inferred from homology"/>
<organism>
    <name type="scientific">Daucus carota</name>
    <name type="common">Wild carrot</name>
    <dbReference type="NCBI Taxonomy" id="4039"/>
    <lineage>
        <taxon>Eukaryota</taxon>
        <taxon>Viridiplantae</taxon>
        <taxon>Streptophyta</taxon>
        <taxon>Embryophyta</taxon>
        <taxon>Tracheophyta</taxon>
        <taxon>Spermatophyta</taxon>
        <taxon>Magnoliopsida</taxon>
        <taxon>eudicotyledons</taxon>
        <taxon>Gunneridae</taxon>
        <taxon>Pentapetalae</taxon>
        <taxon>asterids</taxon>
        <taxon>campanulids</taxon>
        <taxon>Apiales</taxon>
        <taxon>Apiaceae</taxon>
        <taxon>Apioideae</taxon>
        <taxon>Scandiceae</taxon>
        <taxon>Daucinae</taxon>
        <taxon>Daucus</taxon>
        <taxon>Daucus sect. Daucus</taxon>
    </lineage>
</organism>
<name>CLPP_DAUCA</name>
<dbReference type="EC" id="3.4.21.92" evidence="1"/>
<dbReference type="EMBL" id="DQ898156">
    <property type="protein sequence ID" value="ABI32448.1"/>
    <property type="molecule type" value="Genomic_DNA"/>
</dbReference>
<dbReference type="RefSeq" id="YP_740142.1">
    <property type="nucleotide sequence ID" value="NC_008325.1"/>
</dbReference>
<dbReference type="SMR" id="Q0G9T7"/>
<dbReference type="MEROPS" id="S14.002"/>
<dbReference type="GeneID" id="4266769"/>
<dbReference type="OMA" id="WVDVYNR"/>
<dbReference type="GO" id="GO:0009570">
    <property type="term" value="C:chloroplast stroma"/>
    <property type="evidence" value="ECO:0007669"/>
    <property type="project" value="UniProtKB-SubCell"/>
</dbReference>
<dbReference type="GO" id="GO:0009368">
    <property type="term" value="C:endopeptidase Clp complex"/>
    <property type="evidence" value="ECO:0007669"/>
    <property type="project" value="TreeGrafter"/>
</dbReference>
<dbReference type="GO" id="GO:0004176">
    <property type="term" value="F:ATP-dependent peptidase activity"/>
    <property type="evidence" value="ECO:0007669"/>
    <property type="project" value="InterPro"/>
</dbReference>
<dbReference type="GO" id="GO:0051117">
    <property type="term" value="F:ATPase binding"/>
    <property type="evidence" value="ECO:0007669"/>
    <property type="project" value="TreeGrafter"/>
</dbReference>
<dbReference type="GO" id="GO:0004252">
    <property type="term" value="F:serine-type endopeptidase activity"/>
    <property type="evidence" value="ECO:0007669"/>
    <property type="project" value="UniProtKB-UniRule"/>
</dbReference>
<dbReference type="GO" id="GO:0006515">
    <property type="term" value="P:protein quality control for misfolded or incompletely synthesized proteins"/>
    <property type="evidence" value="ECO:0007669"/>
    <property type="project" value="TreeGrafter"/>
</dbReference>
<dbReference type="CDD" id="cd07017">
    <property type="entry name" value="S14_ClpP_2"/>
    <property type="match status" value="1"/>
</dbReference>
<dbReference type="FunFam" id="3.90.226.10:FF:000006">
    <property type="entry name" value="ATP-dependent Clp protease proteolytic subunit"/>
    <property type="match status" value="1"/>
</dbReference>
<dbReference type="Gene3D" id="3.90.226.10">
    <property type="entry name" value="2-enoyl-CoA Hydratase, Chain A, domain 1"/>
    <property type="match status" value="1"/>
</dbReference>
<dbReference type="HAMAP" id="MF_00444">
    <property type="entry name" value="ClpP"/>
    <property type="match status" value="1"/>
</dbReference>
<dbReference type="InterPro" id="IPR001907">
    <property type="entry name" value="ClpP"/>
</dbReference>
<dbReference type="InterPro" id="IPR029045">
    <property type="entry name" value="ClpP/crotonase-like_dom_sf"/>
</dbReference>
<dbReference type="InterPro" id="IPR023562">
    <property type="entry name" value="ClpP/TepA"/>
</dbReference>
<dbReference type="InterPro" id="IPR033135">
    <property type="entry name" value="ClpP_His_AS"/>
</dbReference>
<dbReference type="InterPro" id="IPR018215">
    <property type="entry name" value="ClpP_Ser_AS"/>
</dbReference>
<dbReference type="PANTHER" id="PTHR10381">
    <property type="entry name" value="ATP-DEPENDENT CLP PROTEASE PROTEOLYTIC SUBUNIT"/>
    <property type="match status" value="1"/>
</dbReference>
<dbReference type="PANTHER" id="PTHR10381:SF15">
    <property type="entry name" value="CHLOROPLASTIC ATP-DEPENDENT CLP PROTEASE PROTEOLYTIC SUBUNIT 1"/>
    <property type="match status" value="1"/>
</dbReference>
<dbReference type="Pfam" id="PF00574">
    <property type="entry name" value="CLP_protease"/>
    <property type="match status" value="1"/>
</dbReference>
<dbReference type="PRINTS" id="PR00127">
    <property type="entry name" value="CLPPROTEASEP"/>
</dbReference>
<dbReference type="SUPFAM" id="SSF52096">
    <property type="entry name" value="ClpP/crotonase"/>
    <property type="match status" value="1"/>
</dbReference>
<dbReference type="PROSITE" id="PS00382">
    <property type="entry name" value="CLP_PROTEASE_HIS"/>
    <property type="match status" value="1"/>
</dbReference>
<dbReference type="PROSITE" id="PS00381">
    <property type="entry name" value="CLP_PROTEASE_SER"/>
    <property type="match status" value="1"/>
</dbReference>
<keyword id="KW-0150">Chloroplast</keyword>
<keyword id="KW-0378">Hydrolase</keyword>
<keyword id="KW-0934">Plastid</keyword>
<keyword id="KW-0645">Protease</keyword>
<keyword id="KW-0720">Serine protease</keyword>
<reference key="1">
    <citation type="journal article" date="2006" name="BMC Genomics">
        <title>Complete plastid genome sequence of Daucus carota: implications for biotechnology and phylogeny of angiosperms.</title>
        <authorList>
            <person name="Ruhlman T."/>
            <person name="Lee S.-B."/>
            <person name="Jansen R.K."/>
            <person name="Hostetler J.B."/>
            <person name="Tallon L.J."/>
            <person name="Town C.D."/>
            <person name="Daniell H."/>
        </authorList>
    </citation>
    <scope>NUCLEOTIDE SEQUENCE [LARGE SCALE GENOMIC DNA]</scope>
    <source>
        <strain>cv. Danvers Half-long</strain>
    </source>
</reference>